<proteinExistence type="evidence at transcript level"/>
<name>MLP1_DROME</name>
<keyword id="KW-0963">Cytoplasm</keyword>
<keyword id="KW-0217">Developmental protein</keyword>
<keyword id="KW-0221">Differentiation</keyword>
<keyword id="KW-0440">LIM domain</keyword>
<keyword id="KW-0479">Metal-binding</keyword>
<keyword id="KW-0517">Myogenesis</keyword>
<keyword id="KW-0539">Nucleus</keyword>
<keyword id="KW-1185">Reference proteome</keyword>
<keyword id="KW-0677">Repeat</keyword>
<keyword id="KW-0862">Zinc</keyword>
<reference key="1">
    <citation type="journal article" date="1994" name="Cell">
        <title>Muscle LIM protein, a novel essential regulator of myogenesis, promotes myogenic differentiation.</title>
        <authorList>
            <person name="Arber S."/>
            <person name="Halder G."/>
            <person name="Caroni P."/>
        </authorList>
    </citation>
    <scope>NUCLEOTIDE SEQUENCE [MRNA]</scope>
    <scope>FUNCTION</scope>
    <scope>TISSUE SPECIFICITY</scope>
    <scope>DEVELOPMENTAL STAGE</scope>
</reference>
<reference key="2">
    <citation type="journal article" date="1996" name="J. Cell Biol.">
        <title>Two muscle-specific LIM proteins in Drosophila.</title>
        <authorList>
            <person name="Stronach B.E."/>
            <person name="Siegrist S.E."/>
            <person name="Beckerle M.C."/>
        </authorList>
    </citation>
    <scope>NUCLEOTIDE SEQUENCE [MRNA]</scope>
</reference>
<reference key="3">
    <citation type="journal article" date="2000" name="Science">
        <title>The genome sequence of Drosophila melanogaster.</title>
        <authorList>
            <person name="Adams M.D."/>
            <person name="Celniker S.E."/>
            <person name="Holt R.A."/>
            <person name="Evans C.A."/>
            <person name="Gocayne J.D."/>
            <person name="Amanatides P.G."/>
            <person name="Scherer S.E."/>
            <person name="Li P.W."/>
            <person name="Hoskins R.A."/>
            <person name="Galle R.F."/>
            <person name="George R.A."/>
            <person name="Lewis S.E."/>
            <person name="Richards S."/>
            <person name="Ashburner M."/>
            <person name="Henderson S.N."/>
            <person name="Sutton G.G."/>
            <person name="Wortman J.R."/>
            <person name="Yandell M.D."/>
            <person name="Zhang Q."/>
            <person name="Chen L.X."/>
            <person name="Brandon R.C."/>
            <person name="Rogers Y.-H.C."/>
            <person name="Blazej R.G."/>
            <person name="Champe M."/>
            <person name="Pfeiffer B.D."/>
            <person name="Wan K.H."/>
            <person name="Doyle C."/>
            <person name="Baxter E.G."/>
            <person name="Helt G."/>
            <person name="Nelson C.R."/>
            <person name="Miklos G.L.G."/>
            <person name="Abril J.F."/>
            <person name="Agbayani A."/>
            <person name="An H.-J."/>
            <person name="Andrews-Pfannkoch C."/>
            <person name="Baldwin D."/>
            <person name="Ballew R.M."/>
            <person name="Basu A."/>
            <person name="Baxendale J."/>
            <person name="Bayraktaroglu L."/>
            <person name="Beasley E.M."/>
            <person name="Beeson K.Y."/>
            <person name="Benos P.V."/>
            <person name="Berman B.P."/>
            <person name="Bhandari D."/>
            <person name="Bolshakov S."/>
            <person name="Borkova D."/>
            <person name="Botchan M.R."/>
            <person name="Bouck J."/>
            <person name="Brokstein P."/>
            <person name="Brottier P."/>
            <person name="Burtis K.C."/>
            <person name="Busam D.A."/>
            <person name="Butler H."/>
            <person name="Cadieu E."/>
            <person name="Center A."/>
            <person name="Chandra I."/>
            <person name="Cherry J.M."/>
            <person name="Cawley S."/>
            <person name="Dahlke C."/>
            <person name="Davenport L.B."/>
            <person name="Davies P."/>
            <person name="de Pablos B."/>
            <person name="Delcher A."/>
            <person name="Deng Z."/>
            <person name="Mays A.D."/>
            <person name="Dew I."/>
            <person name="Dietz S.M."/>
            <person name="Dodson K."/>
            <person name="Doup L.E."/>
            <person name="Downes M."/>
            <person name="Dugan-Rocha S."/>
            <person name="Dunkov B.C."/>
            <person name="Dunn P."/>
            <person name="Durbin K.J."/>
            <person name="Evangelista C.C."/>
            <person name="Ferraz C."/>
            <person name="Ferriera S."/>
            <person name="Fleischmann W."/>
            <person name="Fosler C."/>
            <person name="Gabrielian A.E."/>
            <person name="Garg N.S."/>
            <person name="Gelbart W.M."/>
            <person name="Glasser K."/>
            <person name="Glodek A."/>
            <person name="Gong F."/>
            <person name="Gorrell J.H."/>
            <person name="Gu Z."/>
            <person name="Guan P."/>
            <person name="Harris M."/>
            <person name="Harris N.L."/>
            <person name="Harvey D.A."/>
            <person name="Heiman T.J."/>
            <person name="Hernandez J.R."/>
            <person name="Houck J."/>
            <person name="Hostin D."/>
            <person name="Houston K.A."/>
            <person name="Howland T.J."/>
            <person name="Wei M.-H."/>
            <person name="Ibegwam C."/>
            <person name="Jalali M."/>
            <person name="Kalush F."/>
            <person name="Karpen G.H."/>
            <person name="Ke Z."/>
            <person name="Kennison J.A."/>
            <person name="Ketchum K.A."/>
            <person name="Kimmel B.E."/>
            <person name="Kodira C.D."/>
            <person name="Kraft C.L."/>
            <person name="Kravitz S."/>
            <person name="Kulp D."/>
            <person name="Lai Z."/>
            <person name="Lasko P."/>
            <person name="Lei Y."/>
            <person name="Levitsky A.A."/>
            <person name="Li J.H."/>
            <person name="Li Z."/>
            <person name="Liang Y."/>
            <person name="Lin X."/>
            <person name="Liu X."/>
            <person name="Mattei B."/>
            <person name="McIntosh T.C."/>
            <person name="McLeod M.P."/>
            <person name="McPherson D."/>
            <person name="Merkulov G."/>
            <person name="Milshina N.V."/>
            <person name="Mobarry C."/>
            <person name="Morris J."/>
            <person name="Moshrefi A."/>
            <person name="Mount S.M."/>
            <person name="Moy M."/>
            <person name="Murphy B."/>
            <person name="Murphy L."/>
            <person name="Muzny D.M."/>
            <person name="Nelson D.L."/>
            <person name="Nelson D.R."/>
            <person name="Nelson K.A."/>
            <person name="Nixon K."/>
            <person name="Nusskern D.R."/>
            <person name="Pacleb J.M."/>
            <person name="Palazzolo M."/>
            <person name="Pittman G.S."/>
            <person name="Pan S."/>
            <person name="Pollard J."/>
            <person name="Puri V."/>
            <person name="Reese M.G."/>
            <person name="Reinert K."/>
            <person name="Remington K."/>
            <person name="Saunders R.D.C."/>
            <person name="Scheeler F."/>
            <person name="Shen H."/>
            <person name="Shue B.C."/>
            <person name="Siden-Kiamos I."/>
            <person name="Simpson M."/>
            <person name="Skupski M.P."/>
            <person name="Smith T.J."/>
            <person name="Spier E."/>
            <person name="Spradling A.C."/>
            <person name="Stapleton M."/>
            <person name="Strong R."/>
            <person name="Sun E."/>
            <person name="Svirskas R."/>
            <person name="Tector C."/>
            <person name="Turner R."/>
            <person name="Venter E."/>
            <person name="Wang A.H."/>
            <person name="Wang X."/>
            <person name="Wang Z.-Y."/>
            <person name="Wassarman D.A."/>
            <person name="Weinstock G.M."/>
            <person name="Weissenbach J."/>
            <person name="Williams S.M."/>
            <person name="Woodage T."/>
            <person name="Worley K.C."/>
            <person name="Wu D."/>
            <person name="Yang S."/>
            <person name="Yao Q.A."/>
            <person name="Ye J."/>
            <person name="Yeh R.-F."/>
            <person name="Zaveri J.S."/>
            <person name="Zhan M."/>
            <person name="Zhang G."/>
            <person name="Zhao Q."/>
            <person name="Zheng L."/>
            <person name="Zheng X.H."/>
            <person name="Zhong F.N."/>
            <person name="Zhong W."/>
            <person name="Zhou X."/>
            <person name="Zhu S.C."/>
            <person name="Zhu X."/>
            <person name="Smith H.O."/>
            <person name="Gibbs R.A."/>
            <person name="Myers E.W."/>
            <person name="Rubin G.M."/>
            <person name="Venter J.C."/>
        </authorList>
    </citation>
    <scope>NUCLEOTIDE SEQUENCE [LARGE SCALE GENOMIC DNA]</scope>
    <source>
        <strain>Berkeley</strain>
    </source>
</reference>
<reference key="4">
    <citation type="journal article" date="2002" name="Genome Biol.">
        <title>Annotation of the Drosophila melanogaster euchromatic genome: a systematic review.</title>
        <authorList>
            <person name="Misra S."/>
            <person name="Crosby M.A."/>
            <person name="Mungall C.J."/>
            <person name="Matthews B.B."/>
            <person name="Campbell K.S."/>
            <person name="Hradecky P."/>
            <person name="Huang Y."/>
            <person name="Kaminker J.S."/>
            <person name="Millburn G.H."/>
            <person name="Prochnik S.E."/>
            <person name="Smith C.D."/>
            <person name="Tupy J.L."/>
            <person name="Whitfield E.J."/>
            <person name="Bayraktaroglu L."/>
            <person name="Berman B.P."/>
            <person name="Bettencourt B.R."/>
            <person name="Celniker S.E."/>
            <person name="de Grey A.D.N.J."/>
            <person name="Drysdale R.A."/>
            <person name="Harris N.L."/>
            <person name="Richter J."/>
            <person name="Russo S."/>
            <person name="Schroeder A.J."/>
            <person name="Shu S.Q."/>
            <person name="Stapleton M."/>
            <person name="Yamada C."/>
            <person name="Ashburner M."/>
            <person name="Gelbart W.M."/>
            <person name="Rubin G.M."/>
            <person name="Lewis S.E."/>
        </authorList>
    </citation>
    <scope>GENOME REANNOTATION</scope>
    <source>
        <strain>Berkeley</strain>
    </source>
</reference>
<reference key="5">
    <citation type="journal article" date="2002" name="Genome Biol.">
        <title>A Drosophila full-length cDNA resource.</title>
        <authorList>
            <person name="Stapleton M."/>
            <person name="Carlson J.W."/>
            <person name="Brokstein P."/>
            <person name="Yu C."/>
            <person name="Champe M."/>
            <person name="George R.A."/>
            <person name="Guarin H."/>
            <person name="Kronmiller B."/>
            <person name="Pacleb J.M."/>
            <person name="Park S."/>
            <person name="Wan K.H."/>
            <person name="Rubin G.M."/>
            <person name="Celniker S.E."/>
        </authorList>
    </citation>
    <scope>NUCLEOTIDE SEQUENCE [LARGE SCALE MRNA]</scope>
    <source>
        <strain>Berkeley</strain>
        <tissue>Embryo</tissue>
        <tissue>Head</tissue>
    </source>
</reference>
<reference key="6">
    <citation type="submission" date="2006-04" db="EMBL/GenBank/DDBJ databases">
        <authorList>
            <person name="Stapleton M."/>
            <person name="Carlson J.W."/>
            <person name="Chavez C."/>
            <person name="Frise E."/>
            <person name="George R.A."/>
            <person name="Pacleb J.M."/>
            <person name="Park S."/>
            <person name="Wan K.H."/>
            <person name="Yu C."/>
            <person name="Celniker S.E."/>
        </authorList>
    </citation>
    <scope>NUCLEOTIDE SEQUENCE [LARGE SCALE MRNA]</scope>
    <source>
        <strain>Berkeley</strain>
    </source>
</reference>
<sequence>MPFVPVETPKCPACGKSVYAAEERVAGGYKFHKTCFKCSMCNKALDSTNCTEHEKELFCKNCHGRKYGPKGYGFGGGAGCLSTDTGAHLNRE</sequence>
<evidence type="ECO:0000255" key="1"/>
<evidence type="ECO:0000255" key="2">
    <source>
        <dbReference type="PROSITE-ProRule" id="PRU00125"/>
    </source>
</evidence>
<evidence type="ECO:0000269" key="3">
    <source>
    </source>
</evidence>
<evidence type="ECO:0000305" key="4"/>
<comment type="function">
    <text evidence="3">Positive regulator of myogenesis.</text>
</comment>
<comment type="subcellular location">
    <subcellularLocation>
        <location>Cytoplasm</location>
    </subcellularLocation>
    <subcellularLocation>
        <location>Nucleus</location>
    </subcellularLocation>
</comment>
<comment type="tissue specificity">
    <text evidence="3">In the embryo, expression is restricted to the somatic, visceral, and pharyngeal muscles. Within the somatic musculature, MLP60 is distributed throughout the muscle fibers. There is no expression in cardiac mesoderm or in fat body.</text>
</comment>
<comment type="developmental stage">
    <text evidence="3">Expression is biphasic, peaking late in embryogenesis (16-24 hours embryos) and during the larval to pupal transition, when the musculature is differentiating. Found in developing muscles of the visceral and somatic mesoderm subsequent to the formation of the muscle precursor cells. Decreased levels are still detectable in adults.</text>
</comment>
<comment type="sequence caution" evidence="4">
    <conflict type="erroneous termination">
        <sequence resource="EMBL-CDS" id="ABE73307"/>
    </conflict>
    <text>Extended C-terminus.</text>
</comment>
<protein>
    <recommendedName>
        <fullName>Muscle LIM protein 1</fullName>
    </recommendedName>
</protein>
<organism>
    <name type="scientific">Drosophila melanogaster</name>
    <name type="common">Fruit fly</name>
    <dbReference type="NCBI Taxonomy" id="7227"/>
    <lineage>
        <taxon>Eukaryota</taxon>
        <taxon>Metazoa</taxon>
        <taxon>Ecdysozoa</taxon>
        <taxon>Arthropoda</taxon>
        <taxon>Hexapoda</taxon>
        <taxon>Insecta</taxon>
        <taxon>Pterygota</taxon>
        <taxon>Neoptera</taxon>
        <taxon>Endopterygota</taxon>
        <taxon>Diptera</taxon>
        <taxon>Brachycera</taxon>
        <taxon>Muscomorpha</taxon>
        <taxon>Ephydroidea</taxon>
        <taxon>Drosophilidae</taxon>
        <taxon>Drosophila</taxon>
        <taxon>Sophophora</taxon>
    </lineage>
</organism>
<feature type="chain" id="PRO_0000075851" description="Muscle LIM protein 1">
    <location>
        <begin position="1"/>
        <end position="92"/>
    </location>
</feature>
<feature type="domain" description="LIM zinc-binding" evidence="2">
    <location>
        <begin position="11"/>
        <end position="62"/>
    </location>
</feature>
<feature type="short sequence motif" description="Nuclear localization signal" evidence="1">
    <location>
        <begin position="65"/>
        <end position="70"/>
    </location>
</feature>
<accession>P53777</accession>
<accession>Q1RKS4</accession>
<accession>Q9W1B4</accession>
<gene>
    <name type="primary">Mlp60A</name>
    <name type="synonym">LIM2</name>
    <name type="synonym">MLP1</name>
    <name type="ORF">CG3220</name>
</gene>
<dbReference type="EMBL" id="X81192">
    <property type="protein sequence ID" value="CAA57064.1"/>
    <property type="molecule type" value="mRNA"/>
</dbReference>
<dbReference type="EMBL" id="X91244">
    <property type="protein sequence ID" value="CAA62626.1"/>
    <property type="molecule type" value="mRNA"/>
</dbReference>
<dbReference type="EMBL" id="AE013599">
    <property type="protein sequence ID" value="AAF47158.2"/>
    <property type="molecule type" value="Genomic_DNA"/>
</dbReference>
<dbReference type="EMBL" id="AY071073">
    <property type="protein sequence ID" value="AAL48695.1"/>
    <property type="molecule type" value="mRNA"/>
</dbReference>
<dbReference type="EMBL" id="AY113643">
    <property type="protein sequence ID" value="AAM29648.1"/>
    <property type="molecule type" value="mRNA"/>
</dbReference>
<dbReference type="EMBL" id="BT025136">
    <property type="protein sequence ID" value="ABE73307.1"/>
    <property type="status" value="ALT_SEQ"/>
    <property type="molecule type" value="mRNA"/>
</dbReference>
<dbReference type="RefSeq" id="NP_001286820.1">
    <property type="nucleotide sequence ID" value="NM_001299891.1"/>
</dbReference>
<dbReference type="RefSeq" id="NP_788435.1">
    <property type="nucleotide sequence ID" value="NM_176255.3"/>
</dbReference>
<dbReference type="BioGRID" id="63432">
    <property type="interactions" value="16"/>
</dbReference>
<dbReference type="FunCoup" id="P53777">
    <property type="interactions" value="43"/>
</dbReference>
<dbReference type="STRING" id="7227.FBpp0309996"/>
<dbReference type="PaxDb" id="7227-FBpp0288975"/>
<dbReference type="DNASU" id="37853"/>
<dbReference type="EnsemblMetazoa" id="FBtr0299696">
    <property type="protein sequence ID" value="FBpp0288974"/>
    <property type="gene ID" value="FBgn0259209"/>
</dbReference>
<dbReference type="EnsemblMetazoa" id="FBtr0344996">
    <property type="protein sequence ID" value="FBpp0311250"/>
    <property type="gene ID" value="FBgn0259209"/>
</dbReference>
<dbReference type="GeneID" id="37853"/>
<dbReference type="KEGG" id="dme:Dmel_CG42309"/>
<dbReference type="AGR" id="FB:FBgn0259209"/>
<dbReference type="CTD" id="37853"/>
<dbReference type="FlyBase" id="FBgn0259209">
    <property type="gene designation" value="Mlp60A"/>
</dbReference>
<dbReference type="VEuPathDB" id="VectorBase:FBgn0259209"/>
<dbReference type="eggNOG" id="KOG1700">
    <property type="taxonomic scope" value="Eukaryota"/>
</dbReference>
<dbReference type="GeneTree" id="ENSGT00940000171011"/>
<dbReference type="HOGENOM" id="CLU_037060_0_0_1"/>
<dbReference type="InParanoid" id="P53777"/>
<dbReference type="OMA" id="LCYAKLY"/>
<dbReference type="OrthoDB" id="1679758at2759"/>
<dbReference type="PhylomeDB" id="P53777"/>
<dbReference type="BioGRID-ORCS" id="37853">
    <property type="hits" value="0 hits in 3 CRISPR screens"/>
</dbReference>
<dbReference type="ChiTaRS" id="Mlp60A">
    <property type="organism name" value="fly"/>
</dbReference>
<dbReference type="GenomeRNAi" id="37853"/>
<dbReference type="PRO" id="PR:P53777"/>
<dbReference type="Proteomes" id="UP000000803">
    <property type="component" value="Chromosome 2R"/>
</dbReference>
<dbReference type="Bgee" id="FBgn0259209">
    <property type="expression patterns" value="Expressed in muscle cell in insect leg and 163 other cell types or tissues"/>
</dbReference>
<dbReference type="ExpressionAtlas" id="P53777">
    <property type="expression patterns" value="baseline and differential"/>
</dbReference>
<dbReference type="GO" id="GO:0005634">
    <property type="term" value="C:nucleus"/>
    <property type="evidence" value="ECO:0000314"/>
    <property type="project" value="FlyBase"/>
</dbReference>
<dbReference type="GO" id="GO:0030018">
    <property type="term" value="C:Z disc"/>
    <property type="evidence" value="ECO:0000314"/>
    <property type="project" value="FlyBase"/>
</dbReference>
<dbReference type="GO" id="GO:0046872">
    <property type="term" value="F:metal ion binding"/>
    <property type="evidence" value="ECO:0007669"/>
    <property type="project" value="UniProtKB-KW"/>
</dbReference>
<dbReference type="GO" id="GO:0030154">
    <property type="term" value="P:cell differentiation"/>
    <property type="evidence" value="ECO:0007669"/>
    <property type="project" value="UniProtKB-KW"/>
</dbReference>
<dbReference type="GO" id="GO:0007517">
    <property type="term" value="P:muscle organ development"/>
    <property type="evidence" value="ECO:0007669"/>
    <property type="project" value="UniProtKB-KW"/>
</dbReference>
<dbReference type="GO" id="GO:0060537">
    <property type="term" value="P:muscle tissue development"/>
    <property type="evidence" value="ECO:0000270"/>
    <property type="project" value="FlyBase"/>
</dbReference>
<dbReference type="CDD" id="cd09404">
    <property type="entry name" value="LIM1_MLP84B_like"/>
    <property type="match status" value="1"/>
</dbReference>
<dbReference type="FunFam" id="2.10.110.10:FF:000001">
    <property type="entry name" value="Cysteine and glycine-rich protein 1"/>
    <property type="match status" value="1"/>
</dbReference>
<dbReference type="Gene3D" id="2.10.110.10">
    <property type="entry name" value="Cysteine Rich Protein"/>
    <property type="match status" value="1"/>
</dbReference>
<dbReference type="InterPro" id="IPR001781">
    <property type="entry name" value="Znf_LIM"/>
</dbReference>
<dbReference type="PANTHER" id="PTHR24215:SF35">
    <property type="entry name" value="MUSCLE LIM PROTEIN MLP84B"/>
    <property type="match status" value="1"/>
</dbReference>
<dbReference type="PANTHER" id="PTHR24215">
    <property type="entry name" value="RHO-GTPASE-ACTIVATING PROTEIN LRG1"/>
    <property type="match status" value="1"/>
</dbReference>
<dbReference type="Pfam" id="PF00412">
    <property type="entry name" value="LIM"/>
    <property type="match status" value="1"/>
</dbReference>
<dbReference type="SMART" id="SM00132">
    <property type="entry name" value="LIM"/>
    <property type="match status" value="1"/>
</dbReference>
<dbReference type="SUPFAM" id="SSF57716">
    <property type="entry name" value="Glucocorticoid receptor-like (DNA-binding domain)"/>
    <property type="match status" value="2"/>
</dbReference>
<dbReference type="PROSITE" id="PS00478">
    <property type="entry name" value="LIM_DOMAIN_1"/>
    <property type="match status" value="1"/>
</dbReference>
<dbReference type="PROSITE" id="PS50023">
    <property type="entry name" value="LIM_DOMAIN_2"/>
    <property type="match status" value="1"/>
</dbReference>